<accession>C1AX07</accession>
<comment type="subunit">
    <text evidence="1">Part of the 50S ribosomal subunit.</text>
</comment>
<comment type="similarity">
    <text evidence="1">Belongs to the bacterial ribosomal protein bL31 family. Type B subfamily.</text>
</comment>
<dbReference type="EMBL" id="AP011115">
    <property type="protein sequence ID" value="BAH53930.1"/>
    <property type="molecule type" value="Genomic_DNA"/>
</dbReference>
<dbReference type="RefSeq" id="WP_015889426.1">
    <property type="nucleotide sequence ID" value="NC_012522.1"/>
</dbReference>
<dbReference type="SMR" id="C1AX07"/>
<dbReference type="STRING" id="632772.ROP_56830"/>
<dbReference type="KEGG" id="rop:ROP_56830"/>
<dbReference type="PATRIC" id="fig|632772.20.peg.5934"/>
<dbReference type="HOGENOM" id="CLU_114306_2_1_11"/>
<dbReference type="OrthoDB" id="9803251at2"/>
<dbReference type="Proteomes" id="UP000002212">
    <property type="component" value="Chromosome"/>
</dbReference>
<dbReference type="GO" id="GO:1990904">
    <property type="term" value="C:ribonucleoprotein complex"/>
    <property type="evidence" value="ECO:0007669"/>
    <property type="project" value="UniProtKB-KW"/>
</dbReference>
<dbReference type="GO" id="GO:0005840">
    <property type="term" value="C:ribosome"/>
    <property type="evidence" value="ECO:0007669"/>
    <property type="project" value="UniProtKB-KW"/>
</dbReference>
<dbReference type="GO" id="GO:0003735">
    <property type="term" value="F:structural constituent of ribosome"/>
    <property type="evidence" value="ECO:0007669"/>
    <property type="project" value="InterPro"/>
</dbReference>
<dbReference type="GO" id="GO:0006412">
    <property type="term" value="P:translation"/>
    <property type="evidence" value="ECO:0007669"/>
    <property type="project" value="UniProtKB-UniRule"/>
</dbReference>
<dbReference type="Gene3D" id="4.10.830.30">
    <property type="entry name" value="Ribosomal protein L31"/>
    <property type="match status" value="1"/>
</dbReference>
<dbReference type="HAMAP" id="MF_00502">
    <property type="entry name" value="Ribosomal_bL31_2"/>
    <property type="match status" value="1"/>
</dbReference>
<dbReference type="InterPro" id="IPR034704">
    <property type="entry name" value="Ribosomal_bL28/bL31-like_sf"/>
</dbReference>
<dbReference type="InterPro" id="IPR002150">
    <property type="entry name" value="Ribosomal_bL31"/>
</dbReference>
<dbReference type="InterPro" id="IPR027493">
    <property type="entry name" value="Ribosomal_bL31_B"/>
</dbReference>
<dbReference type="InterPro" id="IPR042105">
    <property type="entry name" value="Ribosomal_bL31_sf"/>
</dbReference>
<dbReference type="NCBIfam" id="TIGR00105">
    <property type="entry name" value="L31"/>
    <property type="match status" value="1"/>
</dbReference>
<dbReference type="NCBIfam" id="NF002462">
    <property type="entry name" value="PRK01678.1"/>
    <property type="match status" value="1"/>
</dbReference>
<dbReference type="PANTHER" id="PTHR33280">
    <property type="entry name" value="50S RIBOSOMAL PROTEIN L31, CHLOROPLASTIC"/>
    <property type="match status" value="1"/>
</dbReference>
<dbReference type="PANTHER" id="PTHR33280:SF1">
    <property type="entry name" value="LARGE RIBOSOMAL SUBUNIT PROTEIN BL31C"/>
    <property type="match status" value="1"/>
</dbReference>
<dbReference type="Pfam" id="PF01197">
    <property type="entry name" value="Ribosomal_L31"/>
    <property type="match status" value="1"/>
</dbReference>
<dbReference type="PRINTS" id="PR01249">
    <property type="entry name" value="RIBOSOMALL31"/>
</dbReference>
<dbReference type="SUPFAM" id="SSF143800">
    <property type="entry name" value="L28p-like"/>
    <property type="match status" value="1"/>
</dbReference>
<dbReference type="PROSITE" id="PS01143">
    <property type="entry name" value="RIBOSOMAL_L31"/>
    <property type="match status" value="1"/>
</dbReference>
<proteinExistence type="inferred from homology"/>
<gene>
    <name evidence="1" type="primary">rpmE2</name>
    <name type="ordered locus">ROP_56830</name>
</gene>
<reference key="1">
    <citation type="submission" date="2009-03" db="EMBL/GenBank/DDBJ databases">
        <title>Comparison of the complete genome sequences of Rhodococcus erythropolis PR4 and Rhodococcus opacus B4.</title>
        <authorList>
            <person name="Takarada H."/>
            <person name="Sekine M."/>
            <person name="Hosoyama A."/>
            <person name="Yamada R."/>
            <person name="Fujisawa T."/>
            <person name="Omata S."/>
            <person name="Shimizu A."/>
            <person name="Tsukatani N."/>
            <person name="Tanikawa S."/>
            <person name="Fujita N."/>
            <person name="Harayama S."/>
        </authorList>
    </citation>
    <scope>NUCLEOTIDE SEQUENCE [LARGE SCALE GENOMIC DNA]</scope>
    <source>
        <strain>B4</strain>
    </source>
</reference>
<protein>
    <recommendedName>
        <fullName evidence="1">Large ribosomal subunit protein bL31B</fullName>
    </recommendedName>
    <alternativeName>
        <fullName evidence="2">50S ribosomal protein L31 type B</fullName>
    </alternativeName>
</protein>
<feature type="chain" id="PRO_1000176990" description="Large ribosomal subunit protein bL31B">
    <location>
        <begin position="1"/>
        <end position="84"/>
    </location>
</feature>
<organism>
    <name type="scientific">Rhodococcus opacus (strain B4)</name>
    <dbReference type="NCBI Taxonomy" id="632772"/>
    <lineage>
        <taxon>Bacteria</taxon>
        <taxon>Bacillati</taxon>
        <taxon>Actinomycetota</taxon>
        <taxon>Actinomycetes</taxon>
        <taxon>Mycobacteriales</taxon>
        <taxon>Nocardiaceae</taxon>
        <taxon>Rhodococcus</taxon>
    </lineage>
</organism>
<sequence length="84" mass="9555">MKPGIHPDYHPVVFQDASTGTTFLTRSTLTSDRTAVWEDGNTYPLVVVDVTSESHPFWTGAQRVMDTAGRVEKFERRYGVRKRP</sequence>
<name>RL31B_RHOOB</name>
<evidence type="ECO:0000255" key="1">
    <source>
        <dbReference type="HAMAP-Rule" id="MF_00502"/>
    </source>
</evidence>
<evidence type="ECO:0000305" key="2"/>
<keyword id="KW-0687">Ribonucleoprotein</keyword>
<keyword id="KW-0689">Ribosomal protein</keyword>